<accession>A4YJI4</accession>
<organism>
    <name type="scientific">Bradyrhizobium sp. (strain ORS 278)</name>
    <dbReference type="NCBI Taxonomy" id="114615"/>
    <lineage>
        <taxon>Bacteria</taxon>
        <taxon>Pseudomonadati</taxon>
        <taxon>Pseudomonadota</taxon>
        <taxon>Alphaproteobacteria</taxon>
        <taxon>Hyphomicrobiales</taxon>
        <taxon>Nitrobacteraceae</taxon>
        <taxon>Bradyrhizobium</taxon>
    </lineage>
</organism>
<reference key="1">
    <citation type="journal article" date="2007" name="Science">
        <title>Legumes symbioses: absence of nod genes in photosynthetic bradyrhizobia.</title>
        <authorList>
            <person name="Giraud E."/>
            <person name="Moulin L."/>
            <person name="Vallenet D."/>
            <person name="Barbe V."/>
            <person name="Cytryn E."/>
            <person name="Avarre J.-C."/>
            <person name="Jaubert M."/>
            <person name="Simon D."/>
            <person name="Cartieaux F."/>
            <person name="Prin Y."/>
            <person name="Bena G."/>
            <person name="Hannibal L."/>
            <person name="Fardoux J."/>
            <person name="Kojadinovic M."/>
            <person name="Vuillet L."/>
            <person name="Lajus A."/>
            <person name="Cruveiller S."/>
            <person name="Rouy Z."/>
            <person name="Mangenot S."/>
            <person name="Segurens B."/>
            <person name="Dossat C."/>
            <person name="Franck W.L."/>
            <person name="Chang W.-S."/>
            <person name="Saunders E."/>
            <person name="Bruce D."/>
            <person name="Richardson P."/>
            <person name="Normand P."/>
            <person name="Dreyfus B."/>
            <person name="Pignol D."/>
            <person name="Stacey G."/>
            <person name="Emerich D."/>
            <person name="Vermeglio A."/>
            <person name="Medigue C."/>
            <person name="Sadowsky M."/>
        </authorList>
    </citation>
    <scope>NUCLEOTIDE SEQUENCE [LARGE SCALE GENOMIC DNA]</scope>
    <source>
        <strain>ORS 278</strain>
    </source>
</reference>
<proteinExistence type="inferred from homology"/>
<sequence length="312" mass="34306">MNWLTNVVRPKIRNILRRETPENLWIKCPDSGQLVFYKDVEANQFVIPGSNYHMRMGASARLKSMFDNETWFDVALPEVTPDPLKFRDERRYADRIKDARARTGMNDAVKVGFGKLEGMGVVIAVQDFDFMGGSLGMAAGEAIVRGLELAVEKKSPFIVFAASGGARMQEGILSLMQMPRTTVAVQMLREARLPYIVVQTNPTTGGVTASYAMLGDVHIAEPGALIGFAGARVIEQTIREKLPEGFQRAEYLLDHGMVDMVVHRHDLRPTLARLCRLLTKAPAVEHAKPAPQLPPPAKPAETAEAPAVATSA</sequence>
<name>ACCD_BRASO</name>
<gene>
    <name evidence="1" type="primary">accD</name>
    <name type="ordered locus">BRADO0089</name>
</gene>
<keyword id="KW-0067">ATP-binding</keyword>
<keyword id="KW-0963">Cytoplasm</keyword>
<keyword id="KW-0275">Fatty acid biosynthesis</keyword>
<keyword id="KW-0276">Fatty acid metabolism</keyword>
<keyword id="KW-0444">Lipid biosynthesis</keyword>
<keyword id="KW-0443">Lipid metabolism</keyword>
<keyword id="KW-0547">Nucleotide-binding</keyword>
<keyword id="KW-1185">Reference proteome</keyword>
<keyword id="KW-0808">Transferase</keyword>
<dbReference type="EC" id="2.1.3.15" evidence="1"/>
<dbReference type="EMBL" id="CU234118">
    <property type="protein sequence ID" value="CAL74060.1"/>
    <property type="molecule type" value="Genomic_DNA"/>
</dbReference>
<dbReference type="RefSeq" id="WP_011923360.1">
    <property type="nucleotide sequence ID" value="NC_009445.1"/>
</dbReference>
<dbReference type="SMR" id="A4YJI4"/>
<dbReference type="STRING" id="114615.BRADO0089"/>
<dbReference type="KEGG" id="bra:BRADO0089"/>
<dbReference type="eggNOG" id="COG0777">
    <property type="taxonomic scope" value="Bacteria"/>
</dbReference>
<dbReference type="HOGENOM" id="CLU_015486_1_0_5"/>
<dbReference type="OrthoDB" id="9772975at2"/>
<dbReference type="UniPathway" id="UPA00655">
    <property type="reaction ID" value="UER00711"/>
</dbReference>
<dbReference type="Proteomes" id="UP000001994">
    <property type="component" value="Chromosome"/>
</dbReference>
<dbReference type="GO" id="GO:0009329">
    <property type="term" value="C:acetate CoA-transferase complex"/>
    <property type="evidence" value="ECO:0007669"/>
    <property type="project" value="TreeGrafter"/>
</dbReference>
<dbReference type="GO" id="GO:0003989">
    <property type="term" value="F:acetyl-CoA carboxylase activity"/>
    <property type="evidence" value="ECO:0007669"/>
    <property type="project" value="InterPro"/>
</dbReference>
<dbReference type="GO" id="GO:0005524">
    <property type="term" value="F:ATP binding"/>
    <property type="evidence" value="ECO:0007669"/>
    <property type="project" value="UniProtKB-KW"/>
</dbReference>
<dbReference type="GO" id="GO:0016743">
    <property type="term" value="F:carboxyl- or carbamoyltransferase activity"/>
    <property type="evidence" value="ECO:0007669"/>
    <property type="project" value="UniProtKB-UniRule"/>
</dbReference>
<dbReference type="GO" id="GO:0006633">
    <property type="term" value="P:fatty acid biosynthetic process"/>
    <property type="evidence" value="ECO:0007669"/>
    <property type="project" value="UniProtKB-KW"/>
</dbReference>
<dbReference type="GO" id="GO:2001295">
    <property type="term" value="P:malonyl-CoA biosynthetic process"/>
    <property type="evidence" value="ECO:0007669"/>
    <property type="project" value="UniProtKB-UniRule"/>
</dbReference>
<dbReference type="Gene3D" id="3.90.226.10">
    <property type="entry name" value="2-enoyl-CoA Hydratase, Chain A, domain 1"/>
    <property type="match status" value="1"/>
</dbReference>
<dbReference type="HAMAP" id="MF_01395">
    <property type="entry name" value="AcetylCoA_CT_beta"/>
    <property type="match status" value="1"/>
</dbReference>
<dbReference type="InterPro" id="IPR034733">
    <property type="entry name" value="AcCoA_carboxyl_beta"/>
</dbReference>
<dbReference type="InterPro" id="IPR000438">
    <property type="entry name" value="Acetyl_CoA_COase_Trfase_b_su"/>
</dbReference>
<dbReference type="InterPro" id="IPR029045">
    <property type="entry name" value="ClpP/crotonase-like_dom_sf"/>
</dbReference>
<dbReference type="InterPro" id="IPR011762">
    <property type="entry name" value="COA_CT_N"/>
</dbReference>
<dbReference type="NCBIfam" id="TIGR00515">
    <property type="entry name" value="accD"/>
    <property type="match status" value="1"/>
</dbReference>
<dbReference type="PANTHER" id="PTHR42995">
    <property type="entry name" value="ACETYL-COENZYME A CARBOXYLASE CARBOXYL TRANSFERASE SUBUNIT BETA, CHLOROPLASTIC"/>
    <property type="match status" value="1"/>
</dbReference>
<dbReference type="PANTHER" id="PTHR42995:SF5">
    <property type="entry name" value="ACETYL-COENZYME A CARBOXYLASE CARBOXYL TRANSFERASE SUBUNIT BETA, CHLOROPLASTIC"/>
    <property type="match status" value="1"/>
</dbReference>
<dbReference type="Pfam" id="PF01039">
    <property type="entry name" value="Carboxyl_trans"/>
    <property type="match status" value="1"/>
</dbReference>
<dbReference type="PRINTS" id="PR01070">
    <property type="entry name" value="ACCCTRFRASEB"/>
</dbReference>
<dbReference type="SUPFAM" id="SSF52096">
    <property type="entry name" value="ClpP/crotonase"/>
    <property type="match status" value="1"/>
</dbReference>
<dbReference type="PROSITE" id="PS50980">
    <property type="entry name" value="COA_CT_NTER"/>
    <property type="match status" value="1"/>
</dbReference>
<evidence type="ECO:0000255" key="1">
    <source>
        <dbReference type="HAMAP-Rule" id="MF_01395"/>
    </source>
</evidence>
<evidence type="ECO:0000255" key="2">
    <source>
        <dbReference type="PROSITE-ProRule" id="PRU01136"/>
    </source>
</evidence>
<evidence type="ECO:0000256" key="3">
    <source>
        <dbReference type="SAM" id="MobiDB-lite"/>
    </source>
</evidence>
<protein>
    <recommendedName>
        <fullName evidence="1">Acetyl-coenzyme A carboxylase carboxyl transferase subunit beta</fullName>
        <shortName evidence="1">ACCase subunit beta</shortName>
        <shortName evidence="1">Acetyl-CoA carboxylase carboxyltransferase subunit beta</shortName>
        <ecNumber evidence="1">2.1.3.15</ecNumber>
    </recommendedName>
</protein>
<feature type="chain" id="PRO_0000389698" description="Acetyl-coenzyme A carboxylase carboxyl transferase subunit beta">
    <location>
        <begin position="1"/>
        <end position="312"/>
    </location>
</feature>
<feature type="domain" description="CoA carboxyltransferase N-terminal" evidence="2">
    <location>
        <begin position="24"/>
        <end position="293"/>
    </location>
</feature>
<feature type="region of interest" description="Disordered" evidence="3">
    <location>
        <begin position="286"/>
        <end position="312"/>
    </location>
</feature>
<feature type="compositionally biased region" description="Low complexity" evidence="3">
    <location>
        <begin position="299"/>
        <end position="312"/>
    </location>
</feature>
<comment type="function">
    <text evidence="1">Component of the acetyl coenzyme A carboxylase (ACC) complex. Biotin carboxylase (BC) catalyzes the carboxylation of biotin on its carrier protein (BCCP) and then the CO(2) group is transferred by the transcarboxylase to acetyl-CoA to form malonyl-CoA.</text>
</comment>
<comment type="catalytic activity">
    <reaction evidence="1">
        <text>N(6)-carboxybiotinyl-L-lysyl-[protein] + acetyl-CoA = N(6)-biotinyl-L-lysyl-[protein] + malonyl-CoA</text>
        <dbReference type="Rhea" id="RHEA:54728"/>
        <dbReference type="Rhea" id="RHEA-COMP:10505"/>
        <dbReference type="Rhea" id="RHEA-COMP:10506"/>
        <dbReference type="ChEBI" id="CHEBI:57288"/>
        <dbReference type="ChEBI" id="CHEBI:57384"/>
        <dbReference type="ChEBI" id="CHEBI:83144"/>
        <dbReference type="ChEBI" id="CHEBI:83145"/>
        <dbReference type="EC" id="2.1.3.15"/>
    </reaction>
</comment>
<comment type="pathway">
    <text evidence="1">Lipid metabolism; malonyl-CoA biosynthesis; malonyl-CoA from acetyl-CoA: step 1/1.</text>
</comment>
<comment type="subunit">
    <text evidence="1">Acetyl-CoA carboxylase is a heterohexamer composed of biotin carboxyl carrier protein (AccB), biotin carboxylase (AccC) and two subunits each of ACCase subunit alpha (AccA) and ACCase subunit beta (AccD).</text>
</comment>
<comment type="subcellular location">
    <subcellularLocation>
        <location evidence="1">Cytoplasm</location>
    </subcellularLocation>
</comment>
<comment type="similarity">
    <text evidence="1">Belongs to the AccD/PCCB family.</text>
</comment>